<proteinExistence type="inferred from homology"/>
<gene>
    <name evidence="1" type="primary">argB</name>
    <name type="ordered locus">Bamb_3143</name>
</gene>
<comment type="function">
    <text evidence="1">Catalyzes the ATP-dependent phosphorylation of N-acetyl-L-glutamate.</text>
</comment>
<comment type="catalytic activity">
    <reaction evidence="1">
        <text>N-acetyl-L-glutamate + ATP = N-acetyl-L-glutamyl 5-phosphate + ADP</text>
        <dbReference type="Rhea" id="RHEA:14629"/>
        <dbReference type="ChEBI" id="CHEBI:30616"/>
        <dbReference type="ChEBI" id="CHEBI:44337"/>
        <dbReference type="ChEBI" id="CHEBI:57936"/>
        <dbReference type="ChEBI" id="CHEBI:456216"/>
        <dbReference type="EC" id="2.7.2.8"/>
    </reaction>
</comment>
<comment type="pathway">
    <text evidence="1">Amino-acid biosynthesis; L-arginine biosynthesis; N(2)-acetyl-L-ornithine from L-glutamate: step 2/4.</text>
</comment>
<comment type="subcellular location">
    <subcellularLocation>
        <location evidence="1">Cytoplasm</location>
    </subcellularLocation>
</comment>
<comment type="similarity">
    <text evidence="1">Belongs to the acetylglutamate kinase family. ArgB subfamily.</text>
</comment>
<comment type="sequence caution" evidence="2">
    <conflict type="erroneous initiation">
        <sequence resource="EMBL-CDS" id="ABI88699"/>
    </conflict>
</comment>
<feature type="chain" id="PRO_0000335612" description="Acetylglutamate kinase">
    <location>
        <begin position="1"/>
        <end position="299"/>
    </location>
</feature>
<feature type="binding site" evidence="1">
    <location>
        <begin position="72"/>
        <end position="73"/>
    </location>
    <ligand>
        <name>substrate</name>
    </ligand>
</feature>
<feature type="binding site" evidence="1">
    <location>
        <position position="94"/>
    </location>
    <ligand>
        <name>substrate</name>
    </ligand>
</feature>
<feature type="binding site" evidence="1">
    <location>
        <position position="196"/>
    </location>
    <ligand>
        <name>substrate</name>
    </ligand>
</feature>
<feature type="site" description="Transition state stabilizer" evidence="1">
    <location>
        <position position="37"/>
    </location>
</feature>
<feature type="site" description="Transition state stabilizer" evidence="1">
    <location>
        <position position="256"/>
    </location>
</feature>
<name>ARGB_BURCM</name>
<sequence>MSEPIDLSQIAPTLKAEILAEALPYIRRYHGKTVVIKYGGNAMTEERLKQGFARDVILLKLVGINPVIVHGGGPQIDQALKKIGKAGTFIQGMRVTDEETMEVVEWVLGGEVQQDIVTLINHFGGHAVGLTGKDGGLIHARKLLMPDRDNPGQYIDIGQVGEVEAINPAVVKALQDDAFIPVISPIGFGEDGLSYNINADLVAGKLATVLNAEKLLMMTNIPGVMDKDGNLLTDLSAREIDALFEDGTISGGMLPKISSALDAAKSGVKSVHIVDGRIEHSVLLEILTEQPFGTMIRSH</sequence>
<keyword id="KW-0028">Amino-acid biosynthesis</keyword>
<keyword id="KW-0055">Arginine biosynthesis</keyword>
<keyword id="KW-0067">ATP-binding</keyword>
<keyword id="KW-0963">Cytoplasm</keyword>
<keyword id="KW-0418">Kinase</keyword>
<keyword id="KW-0547">Nucleotide-binding</keyword>
<keyword id="KW-0808">Transferase</keyword>
<dbReference type="EC" id="2.7.2.8" evidence="1"/>
<dbReference type="EMBL" id="CP000440">
    <property type="protein sequence ID" value="ABI88699.1"/>
    <property type="status" value="ALT_INIT"/>
    <property type="molecule type" value="Genomic_DNA"/>
</dbReference>
<dbReference type="RefSeq" id="WP_006754950.1">
    <property type="nucleotide sequence ID" value="NZ_CP009798.1"/>
</dbReference>
<dbReference type="SMR" id="Q0BAX4"/>
<dbReference type="GeneID" id="93084661"/>
<dbReference type="KEGG" id="bam:Bamb_3143"/>
<dbReference type="PATRIC" id="fig|339670.21.peg.1716"/>
<dbReference type="eggNOG" id="COG0548">
    <property type="taxonomic scope" value="Bacteria"/>
</dbReference>
<dbReference type="UniPathway" id="UPA00068">
    <property type="reaction ID" value="UER00107"/>
</dbReference>
<dbReference type="Proteomes" id="UP000000662">
    <property type="component" value="Chromosome 1"/>
</dbReference>
<dbReference type="GO" id="GO:0005737">
    <property type="term" value="C:cytoplasm"/>
    <property type="evidence" value="ECO:0007669"/>
    <property type="project" value="UniProtKB-SubCell"/>
</dbReference>
<dbReference type="GO" id="GO:0003991">
    <property type="term" value="F:acetylglutamate kinase activity"/>
    <property type="evidence" value="ECO:0007669"/>
    <property type="project" value="UniProtKB-UniRule"/>
</dbReference>
<dbReference type="GO" id="GO:0005524">
    <property type="term" value="F:ATP binding"/>
    <property type="evidence" value="ECO:0007669"/>
    <property type="project" value="UniProtKB-UniRule"/>
</dbReference>
<dbReference type="GO" id="GO:0042450">
    <property type="term" value="P:arginine biosynthetic process via ornithine"/>
    <property type="evidence" value="ECO:0007669"/>
    <property type="project" value="UniProtKB-UniRule"/>
</dbReference>
<dbReference type="GO" id="GO:0006526">
    <property type="term" value="P:L-arginine biosynthetic process"/>
    <property type="evidence" value="ECO:0007669"/>
    <property type="project" value="UniProtKB-UniPathway"/>
</dbReference>
<dbReference type="CDD" id="cd04250">
    <property type="entry name" value="AAK_NAGK-C"/>
    <property type="match status" value="1"/>
</dbReference>
<dbReference type="FunFam" id="3.40.1160.10:FF:000004">
    <property type="entry name" value="Acetylglutamate kinase"/>
    <property type="match status" value="1"/>
</dbReference>
<dbReference type="Gene3D" id="3.40.1160.10">
    <property type="entry name" value="Acetylglutamate kinase-like"/>
    <property type="match status" value="1"/>
</dbReference>
<dbReference type="HAMAP" id="MF_00082">
    <property type="entry name" value="ArgB"/>
    <property type="match status" value="1"/>
</dbReference>
<dbReference type="InterPro" id="IPR036393">
    <property type="entry name" value="AceGlu_kinase-like_sf"/>
</dbReference>
<dbReference type="InterPro" id="IPR004662">
    <property type="entry name" value="AcgluKinase_fam"/>
</dbReference>
<dbReference type="InterPro" id="IPR037528">
    <property type="entry name" value="ArgB"/>
</dbReference>
<dbReference type="InterPro" id="IPR001048">
    <property type="entry name" value="Asp/Glu/Uridylate_kinase"/>
</dbReference>
<dbReference type="InterPro" id="IPR041727">
    <property type="entry name" value="NAGK-C"/>
</dbReference>
<dbReference type="NCBIfam" id="TIGR00761">
    <property type="entry name" value="argB"/>
    <property type="match status" value="1"/>
</dbReference>
<dbReference type="PANTHER" id="PTHR23342">
    <property type="entry name" value="N-ACETYLGLUTAMATE SYNTHASE"/>
    <property type="match status" value="1"/>
</dbReference>
<dbReference type="PANTHER" id="PTHR23342:SF0">
    <property type="entry name" value="N-ACETYLGLUTAMATE SYNTHASE, MITOCHONDRIAL"/>
    <property type="match status" value="1"/>
</dbReference>
<dbReference type="Pfam" id="PF00696">
    <property type="entry name" value="AA_kinase"/>
    <property type="match status" value="1"/>
</dbReference>
<dbReference type="PIRSF" id="PIRSF000728">
    <property type="entry name" value="NAGK"/>
    <property type="match status" value="1"/>
</dbReference>
<dbReference type="SUPFAM" id="SSF53633">
    <property type="entry name" value="Carbamate kinase-like"/>
    <property type="match status" value="1"/>
</dbReference>
<accession>Q0BAX4</accession>
<protein>
    <recommendedName>
        <fullName evidence="1">Acetylglutamate kinase</fullName>
        <ecNumber evidence="1">2.7.2.8</ecNumber>
    </recommendedName>
    <alternativeName>
        <fullName evidence="1">N-acetyl-L-glutamate 5-phosphotransferase</fullName>
    </alternativeName>
    <alternativeName>
        <fullName evidence="1">NAG kinase</fullName>
        <shortName evidence="1">NAGK</shortName>
    </alternativeName>
</protein>
<organism>
    <name type="scientific">Burkholderia ambifaria (strain ATCC BAA-244 / DSM 16087 / CCUG 44356 / LMG 19182 / AMMD)</name>
    <name type="common">Burkholderia cepacia (strain AMMD)</name>
    <dbReference type="NCBI Taxonomy" id="339670"/>
    <lineage>
        <taxon>Bacteria</taxon>
        <taxon>Pseudomonadati</taxon>
        <taxon>Pseudomonadota</taxon>
        <taxon>Betaproteobacteria</taxon>
        <taxon>Burkholderiales</taxon>
        <taxon>Burkholderiaceae</taxon>
        <taxon>Burkholderia</taxon>
        <taxon>Burkholderia cepacia complex</taxon>
    </lineage>
</organism>
<reference key="1">
    <citation type="submission" date="2006-08" db="EMBL/GenBank/DDBJ databases">
        <title>Complete sequence of chromosome 1 of Burkholderia cepacia AMMD.</title>
        <authorList>
            <person name="Copeland A."/>
            <person name="Lucas S."/>
            <person name="Lapidus A."/>
            <person name="Barry K."/>
            <person name="Detter J.C."/>
            <person name="Glavina del Rio T."/>
            <person name="Hammon N."/>
            <person name="Israni S."/>
            <person name="Pitluck S."/>
            <person name="Bruce D."/>
            <person name="Chain P."/>
            <person name="Malfatti S."/>
            <person name="Shin M."/>
            <person name="Vergez L."/>
            <person name="Schmutz J."/>
            <person name="Larimer F."/>
            <person name="Land M."/>
            <person name="Hauser L."/>
            <person name="Kyrpides N."/>
            <person name="Kim E."/>
            <person name="Parke J."/>
            <person name="Coenye T."/>
            <person name="Konstantinidis K."/>
            <person name="Ramette A."/>
            <person name="Tiedje J."/>
            <person name="Richardson P."/>
        </authorList>
    </citation>
    <scope>NUCLEOTIDE SEQUENCE [LARGE SCALE GENOMIC DNA]</scope>
    <source>
        <strain>ATCC BAA-244 / DSM 16087 / CCUG 44356 / LMG 19182 / AMMD</strain>
    </source>
</reference>
<evidence type="ECO:0000255" key="1">
    <source>
        <dbReference type="HAMAP-Rule" id="MF_00082"/>
    </source>
</evidence>
<evidence type="ECO:0000305" key="2"/>